<keyword id="KW-1185">Reference proteome</keyword>
<keyword id="KW-0687">Ribonucleoprotein</keyword>
<keyword id="KW-0689">Ribosomal protein</keyword>
<dbReference type="EMBL" id="CP000116">
    <property type="protein sequence ID" value="AAZ96818.1"/>
    <property type="molecule type" value="Genomic_DNA"/>
</dbReference>
<dbReference type="RefSeq" id="WP_011311377.1">
    <property type="nucleotide sequence ID" value="NC_007404.1"/>
</dbReference>
<dbReference type="SMR" id="Q3SKG3"/>
<dbReference type="STRING" id="292415.Tbd_0865"/>
<dbReference type="KEGG" id="tbd:Tbd_0865"/>
<dbReference type="eggNOG" id="COG0211">
    <property type="taxonomic scope" value="Bacteria"/>
</dbReference>
<dbReference type="HOGENOM" id="CLU_095424_4_1_4"/>
<dbReference type="OrthoDB" id="9803474at2"/>
<dbReference type="Proteomes" id="UP000008291">
    <property type="component" value="Chromosome"/>
</dbReference>
<dbReference type="GO" id="GO:0022625">
    <property type="term" value="C:cytosolic large ribosomal subunit"/>
    <property type="evidence" value="ECO:0007669"/>
    <property type="project" value="TreeGrafter"/>
</dbReference>
<dbReference type="GO" id="GO:0003735">
    <property type="term" value="F:structural constituent of ribosome"/>
    <property type="evidence" value="ECO:0007669"/>
    <property type="project" value="InterPro"/>
</dbReference>
<dbReference type="GO" id="GO:0006412">
    <property type="term" value="P:translation"/>
    <property type="evidence" value="ECO:0007669"/>
    <property type="project" value="UniProtKB-UniRule"/>
</dbReference>
<dbReference type="FunFam" id="2.40.50.100:FF:000001">
    <property type="entry name" value="50S ribosomal protein L27"/>
    <property type="match status" value="1"/>
</dbReference>
<dbReference type="Gene3D" id="2.40.50.100">
    <property type="match status" value="1"/>
</dbReference>
<dbReference type="HAMAP" id="MF_00539">
    <property type="entry name" value="Ribosomal_bL27"/>
    <property type="match status" value="1"/>
</dbReference>
<dbReference type="InterPro" id="IPR001684">
    <property type="entry name" value="Ribosomal_bL27"/>
</dbReference>
<dbReference type="InterPro" id="IPR018261">
    <property type="entry name" value="Ribosomal_bL27_CS"/>
</dbReference>
<dbReference type="NCBIfam" id="TIGR00062">
    <property type="entry name" value="L27"/>
    <property type="match status" value="1"/>
</dbReference>
<dbReference type="PANTHER" id="PTHR15893:SF0">
    <property type="entry name" value="LARGE RIBOSOMAL SUBUNIT PROTEIN BL27M"/>
    <property type="match status" value="1"/>
</dbReference>
<dbReference type="PANTHER" id="PTHR15893">
    <property type="entry name" value="RIBOSOMAL PROTEIN L27"/>
    <property type="match status" value="1"/>
</dbReference>
<dbReference type="Pfam" id="PF01016">
    <property type="entry name" value="Ribosomal_L27"/>
    <property type="match status" value="1"/>
</dbReference>
<dbReference type="PRINTS" id="PR00063">
    <property type="entry name" value="RIBOSOMALL27"/>
</dbReference>
<dbReference type="SUPFAM" id="SSF110324">
    <property type="entry name" value="Ribosomal L27 protein-like"/>
    <property type="match status" value="1"/>
</dbReference>
<dbReference type="PROSITE" id="PS00831">
    <property type="entry name" value="RIBOSOMAL_L27"/>
    <property type="match status" value="1"/>
</dbReference>
<name>RL27_THIDA</name>
<reference key="1">
    <citation type="journal article" date="2006" name="J. Bacteriol.">
        <title>The genome sequence of the obligately chemolithoautotrophic, facultatively anaerobic bacterium Thiobacillus denitrificans.</title>
        <authorList>
            <person name="Beller H.R."/>
            <person name="Chain P.S."/>
            <person name="Letain T.E."/>
            <person name="Chakicherla A."/>
            <person name="Larimer F.W."/>
            <person name="Richardson P.M."/>
            <person name="Coleman M.A."/>
            <person name="Wood A.P."/>
            <person name="Kelly D.P."/>
        </authorList>
    </citation>
    <scope>NUCLEOTIDE SEQUENCE [LARGE SCALE GENOMIC DNA]</scope>
    <source>
        <strain>ATCC 25259 / T1</strain>
    </source>
</reference>
<protein>
    <recommendedName>
        <fullName evidence="1">Large ribosomal subunit protein bL27</fullName>
    </recommendedName>
    <alternativeName>
        <fullName evidence="3">50S ribosomal protein L27</fullName>
    </alternativeName>
</protein>
<proteinExistence type="inferred from homology"/>
<feature type="chain" id="PRO_1000017640" description="Large ribosomal subunit protein bL27">
    <location>
        <begin position="1"/>
        <end position="87"/>
    </location>
</feature>
<feature type="region of interest" description="Disordered" evidence="2">
    <location>
        <begin position="1"/>
        <end position="20"/>
    </location>
</feature>
<sequence length="87" mass="9352">MAHKKAGGSSRNGRDSESKRLGVKRFGGQVVLAGNILVRQRGTQFHPGDNVGIGKDHTLFAKTDGTVKFEIKGAARRKVVRIEPLAA</sequence>
<evidence type="ECO:0000255" key="1">
    <source>
        <dbReference type="HAMAP-Rule" id="MF_00539"/>
    </source>
</evidence>
<evidence type="ECO:0000256" key="2">
    <source>
        <dbReference type="SAM" id="MobiDB-lite"/>
    </source>
</evidence>
<evidence type="ECO:0000305" key="3"/>
<comment type="similarity">
    <text evidence="1">Belongs to the bacterial ribosomal protein bL27 family.</text>
</comment>
<organism>
    <name type="scientific">Thiobacillus denitrificans (strain ATCC 25259 / T1)</name>
    <dbReference type="NCBI Taxonomy" id="292415"/>
    <lineage>
        <taxon>Bacteria</taxon>
        <taxon>Pseudomonadati</taxon>
        <taxon>Pseudomonadota</taxon>
        <taxon>Betaproteobacteria</taxon>
        <taxon>Nitrosomonadales</taxon>
        <taxon>Thiobacillaceae</taxon>
        <taxon>Thiobacillus</taxon>
    </lineage>
</organism>
<accession>Q3SKG3</accession>
<gene>
    <name evidence="1" type="primary">rpmA</name>
    <name type="ordered locus">Tbd_0865</name>
</gene>